<sequence length="269" mass="27977">MTVEQREASRLGPLFDSCRAENRAALIGYLPTGYPDVNTSVRAMTELVESGCDIVEVGVPYSDPGMDGPTIQRATEAALSGGVRVRDALTAVESISKAGGRAVVMTYWNPVLRYGVDAFARDLAAAGGHGLITPDLIPDEAQQWLAASDEHGLDRIFLVAPSSTPERLANTVAASRGFVYAASTMGVTGARDAVSNAAPDLVARVKAVSDIPVGVGLGVRSREQAAEIGRYADGVIVGSALVSALGDGLPSLRSLTEELAAGVRQRNSP</sequence>
<organism>
    <name type="scientific">Mycobacterium marinum (strain ATCC BAA-535 / M)</name>
    <dbReference type="NCBI Taxonomy" id="216594"/>
    <lineage>
        <taxon>Bacteria</taxon>
        <taxon>Bacillati</taxon>
        <taxon>Actinomycetota</taxon>
        <taxon>Actinomycetes</taxon>
        <taxon>Mycobacteriales</taxon>
        <taxon>Mycobacteriaceae</taxon>
        <taxon>Mycobacterium</taxon>
        <taxon>Mycobacterium ulcerans group</taxon>
    </lineage>
</organism>
<gene>
    <name evidence="1" type="primary">trpA</name>
    <name type="ordered locus">MMAR_2415</name>
</gene>
<reference key="1">
    <citation type="journal article" date="2008" name="Genome Res.">
        <title>Insights from the complete genome sequence of Mycobacterium marinum on the evolution of Mycobacterium tuberculosis.</title>
        <authorList>
            <person name="Stinear T.P."/>
            <person name="Seemann T."/>
            <person name="Harrison P.F."/>
            <person name="Jenkin G.A."/>
            <person name="Davies J.K."/>
            <person name="Johnson P.D."/>
            <person name="Abdellah Z."/>
            <person name="Arrowsmith C."/>
            <person name="Chillingworth T."/>
            <person name="Churcher C."/>
            <person name="Clarke K."/>
            <person name="Cronin A."/>
            <person name="Davis P."/>
            <person name="Goodhead I."/>
            <person name="Holroyd N."/>
            <person name="Jagels K."/>
            <person name="Lord A."/>
            <person name="Moule S."/>
            <person name="Mungall K."/>
            <person name="Norbertczak H."/>
            <person name="Quail M.A."/>
            <person name="Rabbinowitsch E."/>
            <person name="Walker D."/>
            <person name="White B."/>
            <person name="Whitehead S."/>
            <person name="Small P.L."/>
            <person name="Brosch R."/>
            <person name="Ramakrishnan L."/>
            <person name="Fischbach M.A."/>
            <person name="Parkhill J."/>
            <person name="Cole S.T."/>
        </authorList>
    </citation>
    <scope>NUCLEOTIDE SEQUENCE [LARGE SCALE GENOMIC DNA]</scope>
    <source>
        <strain>ATCC BAA-535 / M</strain>
    </source>
</reference>
<comment type="function">
    <text evidence="1">The alpha subunit is responsible for the aldol cleavage of indoleglycerol phosphate to indole and glyceraldehyde 3-phosphate.</text>
</comment>
<comment type="catalytic activity">
    <reaction evidence="1">
        <text>(1S,2R)-1-C-(indol-3-yl)glycerol 3-phosphate + L-serine = D-glyceraldehyde 3-phosphate + L-tryptophan + H2O</text>
        <dbReference type="Rhea" id="RHEA:10532"/>
        <dbReference type="ChEBI" id="CHEBI:15377"/>
        <dbReference type="ChEBI" id="CHEBI:33384"/>
        <dbReference type="ChEBI" id="CHEBI:57912"/>
        <dbReference type="ChEBI" id="CHEBI:58866"/>
        <dbReference type="ChEBI" id="CHEBI:59776"/>
        <dbReference type="EC" id="4.2.1.20"/>
    </reaction>
</comment>
<comment type="pathway">
    <text evidence="1">Amino-acid biosynthesis; L-tryptophan biosynthesis; L-tryptophan from chorismate: step 5/5.</text>
</comment>
<comment type="subunit">
    <text evidence="1">Tetramer of two alpha and two beta chains.</text>
</comment>
<comment type="similarity">
    <text evidence="1">Belongs to the TrpA family.</text>
</comment>
<name>TRPA_MYCMM</name>
<accession>B2HQX9</accession>
<dbReference type="EC" id="4.2.1.20" evidence="1"/>
<dbReference type="EMBL" id="CP000854">
    <property type="protein sequence ID" value="ACC40865.1"/>
    <property type="molecule type" value="Genomic_DNA"/>
</dbReference>
<dbReference type="SMR" id="B2HQX9"/>
<dbReference type="STRING" id="216594.MMAR_2415"/>
<dbReference type="KEGG" id="mmi:MMAR_2415"/>
<dbReference type="eggNOG" id="COG0159">
    <property type="taxonomic scope" value="Bacteria"/>
</dbReference>
<dbReference type="HOGENOM" id="CLU_016734_0_0_11"/>
<dbReference type="UniPathway" id="UPA00035">
    <property type="reaction ID" value="UER00044"/>
</dbReference>
<dbReference type="Proteomes" id="UP000001190">
    <property type="component" value="Chromosome"/>
</dbReference>
<dbReference type="GO" id="GO:0005829">
    <property type="term" value="C:cytosol"/>
    <property type="evidence" value="ECO:0007669"/>
    <property type="project" value="TreeGrafter"/>
</dbReference>
<dbReference type="GO" id="GO:0004834">
    <property type="term" value="F:tryptophan synthase activity"/>
    <property type="evidence" value="ECO:0007669"/>
    <property type="project" value="UniProtKB-UniRule"/>
</dbReference>
<dbReference type="CDD" id="cd04724">
    <property type="entry name" value="Tryptophan_synthase_alpha"/>
    <property type="match status" value="1"/>
</dbReference>
<dbReference type="FunFam" id="3.20.20.70:FF:000037">
    <property type="entry name" value="Tryptophan synthase alpha chain"/>
    <property type="match status" value="1"/>
</dbReference>
<dbReference type="Gene3D" id="3.20.20.70">
    <property type="entry name" value="Aldolase class I"/>
    <property type="match status" value="1"/>
</dbReference>
<dbReference type="HAMAP" id="MF_00131">
    <property type="entry name" value="Trp_synth_alpha"/>
    <property type="match status" value="1"/>
</dbReference>
<dbReference type="InterPro" id="IPR013785">
    <property type="entry name" value="Aldolase_TIM"/>
</dbReference>
<dbReference type="InterPro" id="IPR011060">
    <property type="entry name" value="RibuloseP-bd_barrel"/>
</dbReference>
<dbReference type="InterPro" id="IPR018204">
    <property type="entry name" value="Trp_synthase_alpha_AS"/>
</dbReference>
<dbReference type="InterPro" id="IPR002028">
    <property type="entry name" value="Trp_synthase_suA"/>
</dbReference>
<dbReference type="NCBIfam" id="TIGR00262">
    <property type="entry name" value="trpA"/>
    <property type="match status" value="1"/>
</dbReference>
<dbReference type="PANTHER" id="PTHR43406:SF1">
    <property type="entry name" value="TRYPTOPHAN SYNTHASE ALPHA CHAIN, CHLOROPLASTIC"/>
    <property type="match status" value="1"/>
</dbReference>
<dbReference type="PANTHER" id="PTHR43406">
    <property type="entry name" value="TRYPTOPHAN SYNTHASE, ALPHA CHAIN"/>
    <property type="match status" value="1"/>
</dbReference>
<dbReference type="Pfam" id="PF00290">
    <property type="entry name" value="Trp_syntA"/>
    <property type="match status" value="1"/>
</dbReference>
<dbReference type="SUPFAM" id="SSF51366">
    <property type="entry name" value="Ribulose-phoshate binding barrel"/>
    <property type="match status" value="1"/>
</dbReference>
<dbReference type="PROSITE" id="PS00167">
    <property type="entry name" value="TRP_SYNTHASE_ALPHA"/>
    <property type="match status" value="1"/>
</dbReference>
<protein>
    <recommendedName>
        <fullName evidence="1">Tryptophan synthase alpha chain</fullName>
        <ecNumber evidence="1">4.2.1.20</ecNumber>
    </recommendedName>
</protein>
<proteinExistence type="inferred from homology"/>
<feature type="chain" id="PRO_1000095733" description="Tryptophan synthase alpha chain">
    <location>
        <begin position="1"/>
        <end position="269"/>
    </location>
</feature>
<feature type="active site" description="Proton acceptor" evidence="1">
    <location>
        <position position="56"/>
    </location>
</feature>
<feature type="active site" description="Proton acceptor" evidence="1">
    <location>
        <position position="67"/>
    </location>
</feature>
<evidence type="ECO:0000255" key="1">
    <source>
        <dbReference type="HAMAP-Rule" id="MF_00131"/>
    </source>
</evidence>
<keyword id="KW-0028">Amino-acid biosynthesis</keyword>
<keyword id="KW-0057">Aromatic amino acid biosynthesis</keyword>
<keyword id="KW-0456">Lyase</keyword>
<keyword id="KW-1185">Reference proteome</keyword>
<keyword id="KW-0822">Tryptophan biosynthesis</keyword>